<sequence>MRYLTAGESHGPSLTTIIEGIPSGLELSSEVINLELKRRQGGYGRGARMTIENDKVSITSGVRHGKTTGAPITLIIENKDHKKWTDIMAVEDLPDKLKRKRKVIHPRPGHADLVGGIKYGYSDLRNALERSSARETAARVAVGAVAKCLLSQLGIETMHHVSVFGGVTIDIPETLTYEELRTKAQKSELSIVNSEQEVEIKTYIDQIKKDGDTLGGVVQTIVTGVPVGLGSYVQWDKKLDAKLAQAVMSINAFKGVEFGEGFAMGYQKGSEVMDEIIWSEEEGYSRKSNHLGGFEGGVTNGQPLLIKGVMKPIPTLYKPLQSVNIETHQPYKASVERSDPTALPAAGVVMENVVATVLAQEILEKFSSDTMKELTKAFQDYTNYTKRY</sequence>
<protein>
    <recommendedName>
        <fullName evidence="1">Chorismate synthase</fullName>
        <shortName evidence="1">CS</shortName>
        <ecNumber evidence="1">4.2.3.5</ecNumber>
    </recommendedName>
    <alternativeName>
        <fullName evidence="1">5-enolpyruvylshikimate-3-phosphate phospholyase</fullName>
    </alternativeName>
</protein>
<keyword id="KW-0028">Amino-acid biosynthesis</keyword>
<keyword id="KW-0057">Aromatic amino acid biosynthesis</keyword>
<keyword id="KW-0274">FAD</keyword>
<keyword id="KW-0285">Flavoprotein</keyword>
<keyword id="KW-0288">FMN</keyword>
<keyword id="KW-0456">Lyase</keyword>
<keyword id="KW-0521">NADP</keyword>
<keyword id="KW-1185">Reference proteome</keyword>
<evidence type="ECO:0000255" key="1">
    <source>
        <dbReference type="HAMAP-Rule" id="MF_00300"/>
    </source>
</evidence>
<dbReference type="EC" id="4.2.3.5" evidence="1"/>
<dbReference type="EMBL" id="AM946015">
    <property type="protein sequence ID" value="CAR41633.1"/>
    <property type="molecule type" value="Genomic_DNA"/>
</dbReference>
<dbReference type="RefSeq" id="WP_012658234.1">
    <property type="nucleotide sequence ID" value="NC_012004.1"/>
</dbReference>
<dbReference type="SMR" id="B9DU46"/>
<dbReference type="STRING" id="218495.SUB0717"/>
<dbReference type="GeneID" id="93826001"/>
<dbReference type="KEGG" id="sub:SUB0717"/>
<dbReference type="eggNOG" id="COG0082">
    <property type="taxonomic scope" value="Bacteria"/>
</dbReference>
<dbReference type="HOGENOM" id="CLU_034547_2_0_9"/>
<dbReference type="OrthoDB" id="9771806at2"/>
<dbReference type="UniPathway" id="UPA00053">
    <property type="reaction ID" value="UER00090"/>
</dbReference>
<dbReference type="Proteomes" id="UP000000449">
    <property type="component" value="Chromosome"/>
</dbReference>
<dbReference type="GO" id="GO:0005829">
    <property type="term" value="C:cytosol"/>
    <property type="evidence" value="ECO:0007669"/>
    <property type="project" value="TreeGrafter"/>
</dbReference>
<dbReference type="GO" id="GO:0004107">
    <property type="term" value="F:chorismate synthase activity"/>
    <property type="evidence" value="ECO:0007669"/>
    <property type="project" value="UniProtKB-UniRule"/>
</dbReference>
<dbReference type="GO" id="GO:0010181">
    <property type="term" value="F:FMN binding"/>
    <property type="evidence" value="ECO:0007669"/>
    <property type="project" value="TreeGrafter"/>
</dbReference>
<dbReference type="GO" id="GO:0008652">
    <property type="term" value="P:amino acid biosynthetic process"/>
    <property type="evidence" value="ECO:0007669"/>
    <property type="project" value="UniProtKB-KW"/>
</dbReference>
<dbReference type="GO" id="GO:0009073">
    <property type="term" value="P:aromatic amino acid family biosynthetic process"/>
    <property type="evidence" value="ECO:0007669"/>
    <property type="project" value="UniProtKB-KW"/>
</dbReference>
<dbReference type="GO" id="GO:0009423">
    <property type="term" value="P:chorismate biosynthetic process"/>
    <property type="evidence" value="ECO:0007669"/>
    <property type="project" value="UniProtKB-UniRule"/>
</dbReference>
<dbReference type="CDD" id="cd07304">
    <property type="entry name" value="Chorismate_synthase"/>
    <property type="match status" value="1"/>
</dbReference>
<dbReference type="FunFam" id="3.60.150.10:FF:000002">
    <property type="entry name" value="Chorismate synthase"/>
    <property type="match status" value="1"/>
</dbReference>
<dbReference type="Gene3D" id="3.60.150.10">
    <property type="entry name" value="Chorismate synthase AroC"/>
    <property type="match status" value="1"/>
</dbReference>
<dbReference type="HAMAP" id="MF_00300">
    <property type="entry name" value="Chorismate_synth"/>
    <property type="match status" value="1"/>
</dbReference>
<dbReference type="InterPro" id="IPR000453">
    <property type="entry name" value="Chorismate_synth"/>
</dbReference>
<dbReference type="InterPro" id="IPR035904">
    <property type="entry name" value="Chorismate_synth_AroC_sf"/>
</dbReference>
<dbReference type="InterPro" id="IPR020541">
    <property type="entry name" value="Chorismate_synthase_CS"/>
</dbReference>
<dbReference type="NCBIfam" id="TIGR00033">
    <property type="entry name" value="aroC"/>
    <property type="match status" value="1"/>
</dbReference>
<dbReference type="NCBIfam" id="NF003793">
    <property type="entry name" value="PRK05382.1"/>
    <property type="match status" value="1"/>
</dbReference>
<dbReference type="PANTHER" id="PTHR21085">
    <property type="entry name" value="CHORISMATE SYNTHASE"/>
    <property type="match status" value="1"/>
</dbReference>
<dbReference type="PANTHER" id="PTHR21085:SF0">
    <property type="entry name" value="CHORISMATE SYNTHASE"/>
    <property type="match status" value="1"/>
</dbReference>
<dbReference type="Pfam" id="PF01264">
    <property type="entry name" value="Chorismate_synt"/>
    <property type="match status" value="1"/>
</dbReference>
<dbReference type="PIRSF" id="PIRSF001456">
    <property type="entry name" value="Chorismate_synth"/>
    <property type="match status" value="1"/>
</dbReference>
<dbReference type="SUPFAM" id="SSF103263">
    <property type="entry name" value="Chorismate synthase, AroC"/>
    <property type="match status" value="1"/>
</dbReference>
<dbReference type="PROSITE" id="PS00787">
    <property type="entry name" value="CHORISMATE_SYNTHASE_1"/>
    <property type="match status" value="1"/>
</dbReference>
<dbReference type="PROSITE" id="PS00788">
    <property type="entry name" value="CHORISMATE_SYNTHASE_2"/>
    <property type="match status" value="1"/>
</dbReference>
<dbReference type="PROSITE" id="PS00789">
    <property type="entry name" value="CHORISMATE_SYNTHASE_3"/>
    <property type="match status" value="1"/>
</dbReference>
<accession>B9DU46</accession>
<reference key="1">
    <citation type="journal article" date="2009" name="BMC Genomics">
        <title>Evidence for niche adaptation in the genome of the bovine pathogen Streptococcus uberis.</title>
        <authorList>
            <person name="Ward P.N."/>
            <person name="Holden M.T.G."/>
            <person name="Leigh J.A."/>
            <person name="Lennard N."/>
            <person name="Bignell A."/>
            <person name="Barron A."/>
            <person name="Clark L."/>
            <person name="Quail M.A."/>
            <person name="Woodward J."/>
            <person name="Barrell B.G."/>
            <person name="Egan S.A."/>
            <person name="Field T.R."/>
            <person name="Maskell D."/>
            <person name="Kehoe M."/>
            <person name="Dowson C.G."/>
            <person name="Chanter N."/>
            <person name="Whatmore A.M."/>
            <person name="Bentley S.D."/>
            <person name="Parkhill J."/>
        </authorList>
    </citation>
    <scope>NUCLEOTIDE SEQUENCE [LARGE SCALE GENOMIC DNA]</scope>
    <source>
        <strain>ATCC BAA-854 / 0140J</strain>
    </source>
</reference>
<gene>
    <name evidence="1" type="primary">aroC</name>
    <name type="ordered locus">SUB0717</name>
</gene>
<comment type="function">
    <text evidence="1">Catalyzes the anti-1,4-elimination of the C-3 phosphate and the C-6 proR hydrogen from 5-enolpyruvylshikimate-3-phosphate (EPSP) to yield chorismate, which is the branch point compound that serves as the starting substrate for the three terminal pathways of aromatic amino acid biosynthesis. This reaction introduces a second double bond into the aromatic ring system.</text>
</comment>
<comment type="catalytic activity">
    <reaction evidence="1">
        <text>5-O-(1-carboxyvinyl)-3-phosphoshikimate = chorismate + phosphate</text>
        <dbReference type="Rhea" id="RHEA:21020"/>
        <dbReference type="ChEBI" id="CHEBI:29748"/>
        <dbReference type="ChEBI" id="CHEBI:43474"/>
        <dbReference type="ChEBI" id="CHEBI:57701"/>
        <dbReference type="EC" id="4.2.3.5"/>
    </reaction>
</comment>
<comment type="cofactor">
    <cofactor evidence="1">
        <name>FMNH2</name>
        <dbReference type="ChEBI" id="CHEBI:57618"/>
    </cofactor>
    <text evidence="1">Reduced FMN (FMNH(2)).</text>
</comment>
<comment type="pathway">
    <text evidence="1">Metabolic intermediate biosynthesis; chorismate biosynthesis; chorismate from D-erythrose 4-phosphate and phosphoenolpyruvate: step 7/7.</text>
</comment>
<comment type="subunit">
    <text evidence="1">Homotetramer.</text>
</comment>
<comment type="similarity">
    <text evidence="1">Belongs to the chorismate synthase family.</text>
</comment>
<name>AROC_STRU0</name>
<proteinExistence type="inferred from homology"/>
<feature type="chain" id="PRO_1000132791" description="Chorismate synthase">
    <location>
        <begin position="1"/>
        <end position="388"/>
    </location>
</feature>
<feature type="binding site" evidence="1">
    <location>
        <position position="39"/>
    </location>
    <ligand>
        <name>NADP(+)</name>
        <dbReference type="ChEBI" id="CHEBI:58349"/>
    </ligand>
</feature>
<feature type="binding site" evidence="1">
    <location>
        <position position="45"/>
    </location>
    <ligand>
        <name>NADP(+)</name>
        <dbReference type="ChEBI" id="CHEBI:58349"/>
    </ligand>
</feature>
<feature type="binding site" evidence="1">
    <location>
        <begin position="130"/>
        <end position="132"/>
    </location>
    <ligand>
        <name>FMN</name>
        <dbReference type="ChEBI" id="CHEBI:58210"/>
    </ligand>
</feature>
<feature type="binding site" evidence="1">
    <location>
        <begin position="251"/>
        <end position="252"/>
    </location>
    <ligand>
        <name>FMN</name>
        <dbReference type="ChEBI" id="CHEBI:58210"/>
    </ligand>
</feature>
<feature type="binding site" evidence="1">
    <location>
        <position position="296"/>
    </location>
    <ligand>
        <name>FMN</name>
        <dbReference type="ChEBI" id="CHEBI:58210"/>
    </ligand>
</feature>
<feature type="binding site" evidence="1">
    <location>
        <begin position="311"/>
        <end position="315"/>
    </location>
    <ligand>
        <name>FMN</name>
        <dbReference type="ChEBI" id="CHEBI:58210"/>
    </ligand>
</feature>
<feature type="binding site" evidence="1">
    <location>
        <position position="337"/>
    </location>
    <ligand>
        <name>FMN</name>
        <dbReference type="ChEBI" id="CHEBI:58210"/>
    </ligand>
</feature>
<organism>
    <name type="scientific">Streptococcus uberis (strain ATCC BAA-854 / 0140J)</name>
    <dbReference type="NCBI Taxonomy" id="218495"/>
    <lineage>
        <taxon>Bacteria</taxon>
        <taxon>Bacillati</taxon>
        <taxon>Bacillota</taxon>
        <taxon>Bacilli</taxon>
        <taxon>Lactobacillales</taxon>
        <taxon>Streptococcaceae</taxon>
        <taxon>Streptococcus</taxon>
    </lineage>
</organism>